<reference key="1">
    <citation type="submission" date="2006-12" db="EMBL/GenBank/DDBJ databases">
        <title>Complete sequence of chromosome 1 of Verminephrobacter eiseniae EF01-2.</title>
        <authorList>
            <person name="Copeland A."/>
            <person name="Lucas S."/>
            <person name="Lapidus A."/>
            <person name="Barry K."/>
            <person name="Detter J.C."/>
            <person name="Glavina del Rio T."/>
            <person name="Dalin E."/>
            <person name="Tice H."/>
            <person name="Pitluck S."/>
            <person name="Chertkov O."/>
            <person name="Brettin T."/>
            <person name="Bruce D."/>
            <person name="Han C."/>
            <person name="Tapia R."/>
            <person name="Gilna P."/>
            <person name="Schmutz J."/>
            <person name="Larimer F."/>
            <person name="Land M."/>
            <person name="Hauser L."/>
            <person name="Kyrpides N."/>
            <person name="Kim E."/>
            <person name="Stahl D."/>
            <person name="Richardson P."/>
        </authorList>
    </citation>
    <scope>NUCLEOTIDE SEQUENCE [LARGE SCALE GENOMIC DNA]</scope>
    <source>
        <strain>EF01-2</strain>
    </source>
</reference>
<name>MIAB_VEREI</name>
<gene>
    <name evidence="1" type="primary">miaB</name>
    <name type="ordered locus">Veis_1721</name>
</gene>
<protein>
    <recommendedName>
        <fullName evidence="1">tRNA-2-methylthio-N(6)-dimethylallyladenosine synthase</fullName>
        <ecNumber evidence="1">2.8.4.3</ecNumber>
    </recommendedName>
    <alternativeName>
        <fullName evidence="1">(Dimethylallyl)adenosine tRNA methylthiotransferase MiaB</fullName>
    </alternativeName>
    <alternativeName>
        <fullName evidence="1">tRNA-i(6)A37 methylthiotransferase</fullName>
    </alternativeName>
</protein>
<comment type="function">
    <text evidence="1">Catalyzes the methylthiolation of N6-(dimethylallyl)adenosine (i(6)A), leading to the formation of 2-methylthio-N6-(dimethylallyl)adenosine (ms(2)i(6)A) at position 37 in tRNAs that read codons beginning with uridine.</text>
</comment>
<comment type="catalytic activity">
    <reaction evidence="1">
        <text>N(6)-dimethylallyladenosine(37) in tRNA + (sulfur carrier)-SH + AH2 + 2 S-adenosyl-L-methionine = 2-methylsulfanyl-N(6)-dimethylallyladenosine(37) in tRNA + (sulfur carrier)-H + 5'-deoxyadenosine + L-methionine + A + S-adenosyl-L-homocysteine + 2 H(+)</text>
        <dbReference type="Rhea" id="RHEA:37067"/>
        <dbReference type="Rhea" id="RHEA-COMP:10375"/>
        <dbReference type="Rhea" id="RHEA-COMP:10376"/>
        <dbReference type="Rhea" id="RHEA-COMP:14737"/>
        <dbReference type="Rhea" id="RHEA-COMP:14739"/>
        <dbReference type="ChEBI" id="CHEBI:13193"/>
        <dbReference type="ChEBI" id="CHEBI:15378"/>
        <dbReference type="ChEBI" id="CHEBI:17319"/>
        <dbReference type="ChEBI" id="CHEBI:17499"/>
        <dbReference type="ChEBI" id="CHEBI:29917"/>
        <dbReference type="ChEBI" id="CHEBI:57844"/>
        <dbReference type="ChEBI" id="CHEBI:57856"/>
        <dbReference type="ChEBI" id="CHEBI:59789"/>
        <dbReference type="ChEBI" id="CHEBI:64428"/>
        <dbReference type="ChEBI" id="CHEBI:74415"/>
        <dbReference type="ChEBI" id="CHEBI:74417"/>
        <dbReference type="EC" id="2.8.4.3"/>
    </reaction>
</comment>
<comment type="cofactor">
    <cofactor evidence="1">
        <name>[4Fe-4S] cluster</name>
        <dbReference type="ChEBI" id="CHEBI:49883"/>
    </cofactor>
    <text evidence="1">Binds 2 [4Fe-4S] clusters. One cluster is coordinated with 3 cysteines and an exchangeable S-adenosyl-L-methionine.</text>
</comment>
<comment type="subunit">
    <text evidence="1">Monomer.</text>
</comment>
<comment type="subcellular location">
    <subcellularLocation>
        <location evidence="1">Cytoplasm</location>
    </subcellularLocation>
</comment>
<comment type="similarity">
    <text evidence="1">Belongs to the methylthiotransferase family. MiaB subfamily.</text>
</comment>
<proteinExistence type="inferred from homology"/>
<evidence type="ECO:0000255" key="1">
    <source>
        <dbReference type="HAMAP-Rule" id="MF_01864"/>
    </source>
</evidence>
<evidence type="ECO:0000255" key="2">
    <source>
        <dbReference type="PROSITE-ProRule" id="PRU01266"/>
    </source>
</evidence>
<sequence length="450" mass="49930">MAKKVFIKTFGCQMNEYDSDKMADVLHAAQGYEPTQNVEEADLILFNTCSVREKAQEKVFSDLGRVKHLKARGVRIGVGGCVASQEGAEIIRRAPYVDVVFGPQTLHRLPELLQQRERLDQPQIDISFPEIEKFDHLPAASVQGASAFVSIMEGCSKYCSYCVVPYTRGEEVSRPLDDVLVEVAGLADQGVKEVTLLGQNVNAYRGRMGSTAQRADLALLLDYVAGIPGVERIRYTTSHPNEFTPRLIEAYARLPKLANHLHLPVQHGSDRILMAMKRGYTAMEYKSTVRKLRAIRPDLALSSDFIVGFPGETQDDFDKLMRLIAEVHFDNSFSFVFSPRPGTPAAGLPDDTPHEVKLRRLQQLQGVIDTHIRSISASRVGTVQRILVEGASRRDAAELMGRTECNRVVNFAGPPHLVGQMVELTITEARAYTLRGQYCAQESPQATMAA</sequence>
<keyword id="KW-0004">4Fe-4S</keyword>
<keyword id="KW-0963">Cytoplasm</keyword>
<keyword id="KW-0408">Iron</keyword>
<keyword id="KW-0411">Iron-sulfur</keyword>
<keyword id="KW-0479">Metal-binding</keyword>
<keyword id="KW-1185">Reference proteome</keyword>
<keyword id="KW-0949">S-adenosyl-L-methionine</keyword>
<keyword id="KW-0808">Transferase</keyword>
<keyword id="KW-0819">tRNA processing</keyword>
<feature type="chain" id="PRO_0000374627" description="tRNA-2-methylthio-N(6)-dimethylallyladenosine synthase">
    <location>
        <begin position="1"/>
        <end position="450"/>
    </location>
</feature>
<feature type="domain" description="MTTase N-terminal" evidence="1">
    <location>
        <begin position="3"/>
        <end position="118"/>
    </location>
</feature>
<feature type="domain" description="Radical SAM core" evidence="2">
    <location>
        <begin position="141"/>
        <end position="376"/>
    </location>
</feature>
<feature type="domain" description="TRAM" evidence="1">
    <location>
        <begin position="377"/>
        <end position="440"/>
    </location>
</feature>
<feature type="binding site" evidence="1">
    <location>
        <position position="12"/>
    </location>
    <ligand>
        <name>[4Fe-4S] cluster</name>
        <dbReference type="ChEBI" id="CHEBI:49883"/>
        <label>1</label>
    </ligand>
</feature>
<feature type="binding site" evidence="1">
    <location>
        <position position="49"/>
    </location>
    <ligand>
        <name>[4Fe-4S] cluster</name>
        <dbReference type="ChEBI" id="CHEBI:49883"/>
        <label>1</label>
    </ligand>
</feature>
<feature type="binding site" evidence="1">
    <location>
        <position position="81"/>
    </location>
    <ligand>
        <name>[4Fe-4S] cluster</name>
        <dbReference type="ChEBI" id="CHEBI:49883"/>
        <label>1</label>
    </ligand>
</feature>
<feature type="binding site" evidence="1">
    <location>
        <position position="155"/>
    </location>
    <ligand>
        <name>[4Fe-4S] cluster</name>
        <dbReference type="ChEBI" id="CHEBI:49883"/>
        <label>2</label>
        <note>4Fe-4S-S-AdoMet</note>
    </ligand>
</feature>
<feature type="binding site" evidence="1">
    <location>
        <position position="159"/>
    </location>
    <ligand>
        <name>[4Fe-4S] cluster</name>
        <dbReference type="ChEBI" id="CHEBI:49883"/>
        <label>2</label>
        <note>4Fe-4S-S-AdoMet</note>
    </ligand>
</feature>
<feature type="binding site" evidence="1">
    <location>
        <position position="162"/>
    </location>
    <ligand>
        <name>[4Fe-4S] cluster</name>
        <dbReference type="ChEBI" id="CHEBI:49883"/>
        <label>2</label>
        <note>4Fe-4S-S-AdoMet</note>
    </ligand>
</feature>
<organism>
    <name type="scientific">Verminephrobacter eiseniae (strain EF01-2)</name>
    <dbReference type="NCBI Taxonomy" id="391735"/>
    <lineage>
        <taxon>Bacteria</taxon>
        <taxon>Pseudomonadati</taxon>
        <taxon>Pseudomonadota</taxon>
        <taxon>Betaproteobacteria</taxon>
        <taxon>Burkholderiales</taxon>
        <taxon>Comamonadaceae</taxon>
        <taxon>Verminephrobacter</taxon>
    </lineage>
</organism>
<accession>A1WIL9</accession>
<dbReference type="EC" id="2.8.4.3" evidence="1"/>
<dbReference type="EMBL" id="CP000542">
    <property type="protein sequence ID" value="ABM57476.1"/>
    <property type="molecule type" value="Genomic_DNA"/>
</dbReference>
<dbReference type="RefSeq" id="WP_011809483.1">
    <property type="nucleotide sequence ID" value="NC_008786.1"/>
</dbReference>
<dbReference type="SMR" id="A1WIL9"/>
<dbReference type="STRING" id="391735.Veis_1721"/>
<dbReference type="GeneID" id="76460325"/>
<dbReference type="KEGG" id="vei:Veis_1721"/>
<dbReference type="eggNOG" id="COG0621">
    <property type="taxonomic scope" value="Bacteria"/>
</dbReference>
<dbReference type="HOGENOM" id="CLU_018697_2_0_4"/>
<dbReference type="OrthoDB" id="9805215at2"/>
<dbReference type="Proteomes" id="UP000000374">
    <property type="component" value="Chromosome"/>
</dbReference>
<dbReference type="GO" id="GO:0005829">
    <property type="term" value="C:cytosol"/>
    <property type="evidence" value="ECO:0007669"/>
    <property type="project" value="TreeGrafter"/>
</dbReference>
<dbReference type="GO" id="GO:0051539">
    <property type="term" value="F:4 iron, 4 sulfur cluster binding"/>
    <property type="evidence" value="ECO:0007669"/>
    <property type="project" value="UniProtKB-UniRule"/>
</dbReference>
<dbReference type="GO" id="GO:0046872">
    <property type="term" value="F:metal ion binding"/>
    <property type="evidence" value="ECO:0007669"/>
    <property type="project" value="UniProtKB-KW"/>
</dbReference>
<dbReference type="GO" id="GO:0035597">
    <property type="term" value="F:N6-isopentenyladenosine methylthiotransferase activity"/>
    <property type="evidence" value="ECO:0007669"/>
    <property type="project" value="TreeGrafter"/>
</dbReference>
<dbReference type="CDD" id="cd01335">
    <property type="entry name" value="Radical_SAM"/>
    <property type="match status" value="1"/>
</dbReference>
<dbReference type="FunFam" id="3.40.50.12160:FF:000001">
    <property type="entry name" value="tRNA-2-methylthio-N(6)-dimethylallyladenosine synthase"/>
    <property type="match status" value="1"/>
</dbReference>
<dbReference type="FunFam" id="3.80.30.20:FF:000001">
    <property type="entry name" value="tRNA-2-methylthio-N(6)-dimethylallyladenosine synthase 2"/>
    <property type="match status" value="1"/>
</dbReference>
<dbReference type="Gene3D" id="3.40.50.12160">
    <property type="entry name" value="Methylthiotransferase, N-terminal domain"/>
    <property type="match status" value="1"/>
</dbReference>
<dbReference type="Gene3D" id="3.80.30.20">
    <property type="entry name" value="tm_1862 like domain"/>
    <property type="match status" value="1"/>
</dbReference>
<dbReference type="HAMAP" id="MF_01864">
    <property type="entry name" value="tRNA_metthiotr_MiaB"/>
    <property type="match status" value="1"/>
</dbReference>
<dbReference type="InterPro" id="IPR006638">
    <property type="entry name" value="Elp3/MiaA/NifB-like_rSAM"/>
</dbReference>
<dbReference type="InterPro" id="IPR005839">
    <property type="entry name" value="Methylthiotransferase"/>
</dbReference>
<dbReference type="InterPro" id="IPR020612">
    <property type="entry name" value="Methylthiotransferase_CS"/>
</dbReference>
<dbReference type="InterPro" id="IPR013848">
    <property type="entry name" value="Methylthiotransferase_N"/>
</dbReference>
<dbReference type="InterPro" id="IPR038135">
    <property type="entry name" value="Methylthiotransferase_N_sf"/>
</dbReference>
<dbReference type="InterPro" id="IPR006463">
    <property type="entry name" value="MiaB_methiolase"/>
</dbReference>
<dbReference type="InterPro" id="IPR007197">
    <property type="entry name" value="rSAM"/>
</dbReference>
<dbReference type="InterPro" id="IPR023404">
    <property type="entry name" value="rSAM_horseshoe"/>
</dbReference>
<dbReference type="InterPro" id="IPR002792">
    <property type="entry name" value="TRAM_dom"/>
</dbReference>
<dbReference type="NCBIfam" id="TIGR01574">
    <property type="entry name" value="miaB-methiolase"/>
    <property type="match status" value="1"/>
</dbReference>
<dbReference type="NCBIfam" id="TIGR00089">
    <property type="entry name" value="MiaB/RimO family radical SAM methylthiotransferase"/>
    <property type="match status" value="1"/>
</dbReference>
<dbReference type="PANTHER" id="PTHR43020">
    <property type="entry name" value="CDK5 REGULATORY SUBUNIT-ASSOCIATED PROTEIN 1"/>
    <property type="match status" value="1"/>
</dbReference>
<dbReference type="PANTHER" id="PTHR43020:SF2">
    <property type="entry name" value="MITOCHONDRIAL TRNA METHYLTHIOTRANSFERASE CDK5RAP1"/>
    <property type="match status" value="1"/>
</dbReference>
<dbReference type="Pfam" id="PF04055">
    <property type="entry name" value="Radical_SAM"/>
    <property type="match status" value="1"/>
</dbReference>
<dbReference type="Pfam" id="PF01938">
    <property type="entry name" value="TRAM"/>
    <property type="match status" value="1"/>
</dbReference>
<dbReference type="Pfam" id="PF00919">
    <property type="entry name" value="UPF0004"/>
    <property type="match status" value="1"/>
</dbReference>
<dbReference type="SFLD" id="SFLDF00273">
    <property type="entry name" value="(dimethylallyl)adenosine_tRNA"/>
    <property type="match status" value="1"/>
</dbReference>
<dbReference type="SFLD" id="SFLDG01082">
    <property type="entry name" value="B12-binding_domain_containing"/>
    <property type="match status" value="1"/>
</dbReference>
<dbReference type="SFLD" id="SFLDG01061">
    <property type="entry name" value="methylthiotransferase"/>
    <property type="match status" value="1"/>
</dbReference>
<dbReference type="SMART" id="SM00729">
    <property type="entry name" value="Elp3"/>
    <property type="match status" value="1"/>
</dbReference>
<dbReference type="SUPFAM" id="SSF102114">
    <property type="entry name" value="Radical SAM enzymes"/>
    <property type="match status" value="1"/>
</dbReference>
<dbReference type="PROSITE" id="PS51449">
    <property type="entry name" value="MTTASE_N"/>
    <property type="match status" value="1"/>
</dbReference>
<dbReference type="PROSITE" id="PS01278">
    <property type="entry name" value="MTTASE_RADICAL"/>
    <property type="match status" value="1"/>
</dbReference>
<dbReference type="PROSITE" id="PS51918">
    <property type="entry name" value="RADICAL_SAM"/>
    <property type="match status" value="1"/>
</dbReference>
<dbReference type="PROSITE" id="PS50926">
    <property type="entry name" value="TRAM"/>
    <property type="match status" value="1"/>
</dbReference>